<gene>
    <name evidence="13" type="primary">SLC16A7</name>
    <name evidence="10" type="synonym">MCT2</name>
</gene>
<reference key="1">
    <citation type="journal article" date="1998" name="J. Biol. Chem.">
        <title>Human monocarboxylate transporter 2 (MCT2) is a high affinity pyruvate transporter.</title>
        <authorList>
            <person name="Lin R.-Y."/>
            <person name="Vera J.C."/>
            <person name="Chaganti R.S.K."/>
            <person name="Golde D.W."/>
        </authorList>
    </citation>
    <scope>NUCLEOTIDE SEQUENCE [MRNA]</scope>
    <scope>FUNCTION</scope>
    <scope>TRANSPORTER ACTIVITY</scope>
    <scope>BIOPHYSICOCHEMICAL PROPERTIES</scope>
    <scope>TISSUE SPECIFICITY</scope>
    <source>
        <tissue>Liver</tissue>
    </source>
</reference>
<reference key="2">
    <citation type="submission" date="1998-04" db="EMBL/GenBank/DDBJ databases">
        <title>Cloning of human monocarboxylate transporter 2 (hMCT2).</title>
        <authorList>
            <person name="Dao L."/>
            <person name="Landschulz W.H."/>
            <person name="Landschulz K.T."/>
        </authorList>
    </citation>
    <scope>NUCLEOTIDE SEQUENCE [MRNA]</scope>
    <scope>VARIANT SER-445</scope>
    <source>
        <tissue>Liver</tissue>
    </source>
</reference>
<reference key="3">
    <citation type="journal article" date="2004" name="Nat. Genet.">
        <title>Complete sequencing and characterization of 21,243 full-length human cDNAs.</title>
        <authorList>
            <person name="Ota T."/>
            <person name="Suzuki Y."/>
            <person name="Nishikawa T."/>
            <person name="Otsuki T."/>
            <person name="Sugiyama T."/>
            <person name="Irie R."/>
            <person name="Wakamatsu A."/>
            <person name="Hayashi K."/>
            <person name="Sato H."/>
            <person name="Nagai K."/>
            <person name="Kimura K."/>
            <person name="Makita H."/>
            <person name="Sekine M."/>
            <person name="Obayashi M."/>
            <person name="Nishi T."/>
            <person name="Shibahara T."/>
            <person name="Tanaka T."/>
            <person name="Ishii S."/>
            <person name="Yamamoto J."/>
            <person name="Saito K."/>
            <person name="Kawai Y."/>
            <person name="Isono Y."/>
            <person name="Nakamura Y."/>
            <person name="Nagahari K."/>
            <person name="Murakami K."/>
            <person name="Yasuda T."/>
            <person name="Iwayanagi T."/>
            <person name="Wagatsuma M."/>
            <person name="Shiratori A."/>
            <person name="Sudo H."/>
            <person name="Hosoiri T."/>
            <person name="Kaku Y."/>
            <person name="Kodaira H."/>
            <person name="Kondo H."/>
            <person name="Sugawara M."/>
            <person name="Takahashi M."/>
            <person name="Kanda K."/>
            <person name="Yokoi T."/>
            <person name="Furuya T."/>
            <person name="Kikkawa E."/>
            <person name="Omura Y."/>
            <person name="Abe K."/>
            <person name="Kamihara K."/>
            <person name="Katsuta N."/>
            <person name="Sato K."/>
            <person name="Tanikawa M."/>
            <person name="Yamazaki M."/>
            <person name="Ninomiya K."/>
            <person name="Ishibashi T."/>
            <person name="Yamashita H."/>
            <person name="Murakawa K."/>
            <person name="Fujimori K."/>
            <person name="Tanai H."/>
            <person name="Kimata M."/>
            <person name="Watanabe M."/>
            <person name="Hiraoka S."/>
            <person name="Chiba Y."/>
            <person name="Ishida S."/>
            <person name="Ono Y."/>
            <person name="Takiguchi S."/>
            <person name="Watanabe S."/>
            <person name="Yosida M."/>
            <person name="Hotuta T."/>
            <person name="Kusano J."/>
            <person name="Kanehori K."/>
            <person name="Takahashi-Fujii A."/>
            <person name="Hara H."/>
            <person name="Tanase T.-O."/>
            <person name="Nomura Y."/>
            <person name="Togiya S."/>
            <person name="Komai F."/>
            <person name="Hara R."/>
            <person name="Takeuchi K."/>
            <person name="Arita M."/>
            <person name="Imose N."/>
            <person name="Musashino K."/>
            <person name="Yuuki H."/>
            <person name="Oshima A."/>
            <person name="Sasaki N."/>
            <person name="Aotsuka S."/>
            <person name="Yoshikawa Y."/>
            <person name="Matsunawa H."/>
            <person name="Ichihara T."/>
            <person name="Shiohata N."/>
            <person name="Sano S."/>
            <person name="Moriya S."/>
            <person name="Momiyama H."/>
            <person name="Satoh N."/>
            <person name="Takami S."/>
            <person name="Terashima Y."/>
            <person name="Suzuki O."/>
            <person name="Nakagawa S."/>
            <person name="Senoh A."/>
            <person name="Mizoguchi H."/>
            <person name="Goto Y."/>
            <person name="Shimizu F."/>
            <person name="Wakebe H."/>
            <person name="Hishigaki H."/>
            <person name="Watanabe T."/>
            <person name="Sugiyama A."/>
            <person name="Takemoto M."/>
            <person name="Kawakami B."/>
            <person name="Yamazaki M."/>
            <person name="Watanabe K."/>
            <person name="Kumagai A."/>
            <person name="Itakura S."/>
            <person name="Fukuzumi Y."/>
            <person name="Fujimori Y."/>
            <person name="Komiyama M."/>
            <person name="Tashiro H."/>
            <person name="Tanigami A."/>
            <person name="Fujiwara T."/>
            <person name="Ono T."/>
            <person name="Yamada K."/>
            <person name="Fujii Y."/>
            <person name="Ozaki K."/>
            <person name="Hirao M."/>
            <person name="Ohmori Y."/>
            <person name="Kawabata A."/>
            <person name="Hikiji T."/>
            <person name="Kobatake N."/>
            <person name="Inagaki H."/>
            <person name="Ikema Y."/>
            <person name="Okamoto S."/>
            <person name="Okitani R."/>
            <person name="Kawakami T."/>
            <person name="Noguchi S."/>
            <person name="Itoh T."/>
            <person name="Shigeta K."/>
            <person name="Senba T."/>
            <person name="Matsumura K."/>
            <person name="Nakajima Y."/>
            <person name="Mizuno T."/>
            <person name="Morinaga M."/>
            <person name="Sasaki M."/>
            <person name="Togashi T."/>
            <person name="Oyama M."/>
            <person name="Hata H."/>
            <person name="Watanabe M."/>
            <person name="Komatsu T."/>
            <person name="Mizushima-Sugano J."/>
            <person name="Satoh T."/>
            <person name="Shirai Y."/>
            <person name="Takahashi Y."/>
            <person name="Nakagawa K."/>
            <person name="Okumura K."/>
            <person name="Nagase T."/>
            <person name="Nomura N."/>
            <person name="Kikuchi H."/>
            <person name="Masuho Y."/>
            <person name="Yamashita R."/>
            <person name="Nakai K."/>
            <person name="Yada T."/>
            <person name="Nakamura Y."/>
            <person name="Ohara O."/>
            <person name="Isogai T."/>
            <person name="Sugano S."/>
        </authorList>
    </citation>
    <scope>NUCLEOTIDE SEQUENCE [LARGE SCALE MRNA]</scope>
    <source>
        <tissue>Testis</tissue>
    </source>
</reference>
<reference key="4">
    <citation type="journal article" date="2006" name="Nature">
        <title>The finished DNA sequence of human chromosome 12.</title>
        <authorList>
            <person name="Scherer S.E."/>
            <person name="Muzny D.M."/>
            <person name="Buhay C.J."/>
            <person name="Chen R."/>
            <person name="Cree A."/>
            <person name="Ding Y."/>
            <person name="Dugan-Rocha S."/>
            <person name="Gill R."/>
            <person name="Gunaratne P."/>
            <person name="Harris R.A."/>
            <person name="Hawes A.C."/>
            <person name="Hernandez J."/>
            <person name="Hodgson A.V."/>
            <person name="Hume J."/>
            <person name="Jackson A."/>
            <person name="Khan Z.M."/>
            <person name="Kovar-Smith C."/>
            <person name="Lewis L.R."/>
            <person name="Lozado R.J."/>
            <person name="Metzker M.L."/>
            <person name="Milosavljevic A."/>
            <person name="Miner G.R."/>
            <person name="Montgomery K.T."/>
            <person name="Morgan M.B."/>
            <person name="Nazareth L.V."/>
            <person name="Scott G."/>
            <person name="Sodergren E."/>
            <person name="Song X.-Z."/>
            <person name="Steffen D."/>
            <person name="Lovering R.C."/>
            <person name="Wheeler D.A."/>
            <person name="Worley K.C."/>
            <person name="Yuan Y."/>
            <person name="Zhang Z."/>
            <person name="Adams C.Q."/>
            <person name="Ansari-Lari M.A."/>
            <person name="Ayele M."/>
            <person name="Brown M.J."/>
            <person name="Chen G."/>
            <person name="Chen Z."/>
            <person name="Clerc-Blankenburg K.P."/>
            <person name="Davis C."/>
            <person name="Delgado O."/>
            <person name="Dinh H.H."/>
            <person name="Draper H."/>
            <person name="Gonzalez-Garay M.L."/>
            <person name="Havlak P."/>
            <person name="Jackson L.R."/>
            <person name="Jacob L.S."/>
            <person name="Kelly S.H."/>
            <person name="Li L."/>
            <person name="Li Z."/>
            <person name="Liu J."/>
            <person name="Liu W."/>
            <person name="Lu J."/>
            <person name="Maheshwari M."/>
            <person name="Nguyen B.-V."/>
            <person name="Okwuonu G.O."/>
            <person name="Pasternak S."/>
            <person name="Perez L.M."/>
            <person name="Plopper F.J.H."/>
            <person name="Santibanez J."/>
            <person name="Shen H."/>
            <person name="Tabor P.E."/>
            <person name="Verduzco D."/>
            <person name="Waldron L."/>
            <person name="Wang Q."/>
            <person name="Williams G.A."/>
            <person name="Zhang J."/>
            <person name="Zhou J."/>
            <person name="Allen C.C."/>
            <person name="Amin A.G."/>
            <person name="Anyalebechi V."/>
            <person name="Bailey M."/>
            <person name="Barbaria J.A."/>
            <person name="Bimage K.E."/>
            <person name="Bryant N.P."/>
            <person name="Burch P.E."/>
            <person name="Burkett C.E."/>
            <person name="Burrell K.L."/>
            <person name="Calderon E."/>
            <person name="Cardenas V."/>
            <person name="Carter K."/>
            <person name="Casias K."/>
            <person name="Cavazos I."/>
            <person name="Cavazos S.R."/>
            <person name="Ceasar H."/>
            <person name="Chacko J."/>
            <person name="Chan S.N."/>
            <person name="Chavez D."/>
            <person name="Christopoulos C."/>
            <person name="Chu J."/>
            <person name="Cockrell R."/>
            <person name="Cox C.D."/>
            <person name="Dang M."/>
            <person name="Dathorne S.R."/>
            <person name="David R."/>
            <person name="Davis C.M."/>
            <person name="Davy-Carroll L."/>
            <person name="Deshazo D.R."/>
            <person name="Donlin J.E."/>
            <person name="D'Souza L."/>
            <person name="Eaves K.A."/>
            <person name="Egan A."/>
            <person name="Emery-Cohen A.J."/>
            <person name="Escotto M."/>
            <person name="Flagg N."/>
            <person name="Forbes L.D."/>
            <person name="Gabisi A.M."/>
            <person name="Garza M."/>
            <person name="Hamilton C."/>
            <person name="Henderson N."/>
            <person name="Hernandez O."/>
            <person name="Hines S."/>
            <person name="Hogues M.E."/>
            <person name="Huang M."/>
            <person name="Idlebird D.G."/>
            <person name="Johnson R."/>
            <person name="Jolivet A."/>
            <person name="Jones S."/>
            <person name="Kagan R."/>
            <person name="King L.M."/>
            <person name="Leal B."/>
            <person name="Lebow H."/>
            <person name="Lee S."/>
            <person name="LeVan J.M."/>
            <person name="Lewis L.C."/>
            <person name="London P."/>
            <person name="Lorensuhewa L.M."/>
            <person name="Loulseged H."/>
            <person name="Lovett D.A."/>
            <person name="Lucier A."/>
            <person name="Lucier R.L."/>
            <person name="Ma J."/>
            <person name="Madu R.C."/>
            <person name="Mapua P."/>
            <person name="Martindale A.D."/>
            <person name="Martinez E."/>
            <person name="Massey E."/>
            <person name="Mawhiney S."/>
            <person name="Meador M.G."/>
            <person name="Mendez S."/>
            <person name="Mercado C."/>
            <person name="Mercado I.C."/>
            <person name="Merritt C.E."/>
            <person name="Miner Z.L."/>
            <person name="Minja E."/>
            <person name="Mitchell T."/>
            <person name="Mohabbat F."/>
            <person name="Mohabbat K."/>
            <person name="Montgomery B."/>
            <person name="Moore N."/>
            <person name="Morris S."/>
            <person name="Munidasa M."/>
            <person name="Ngo R.N."/>
            <person name="Nguyen N.B."/>
            <person name="Nickerson E."/>
            <person name="Nwaokelemeh O.O."/>
            <person name="Nwokenkwo S."/>
            <person name="Obregon M."/>
            <person name="Oguh M."/>
            <person name="Oragunye N."/>
            <person name="Oviedo R.J."/>
            <person name="Parish B.J."/>
            <person name="Parker D.N."/>
            <person name="Parrish J."/>
            <person name="Parks K.L."/>
            <person name="Paul H.A."/>
            <person name="Payton B.A."/>
            <person name="Perez A."/>
            <person name="Perrin W."/>
            <person name="Pickens A."/>
            <person name="Primus E.L."/>
            <person name="Pu L.-L."/>
            <person name="Puazo M."/>
            <person name="Quiles M.M."/>
            <person name="Quiroz J.B."/>
            <person name="Rabata D."/>
            <person name="Reeves K."/>
            <person name="Ruiz S.J."/>
            <person name="Shao H."/>
            <person name="Sisson I."/>
            <person name="Sonaike T."/>
            <person name="Sorelle R.P."/>
            <person name="Sutton A.E."/>
            <person name="Svatek A.F."/>
            <person name="Svetz L.A."/>
            <person name="Tamerisa K.S."/>
            <person name="Taylor T.R."/>
            <person name="Teague B."/>
            <person name="Thomas N."/>
            <person name="Thorn R.D."/>
            <person name="Trejos Z.Y."/>
            <person name="Trevino B.K."/>
            <person name="Ukegbu O.N."/>
            <person name="Urban J.B."/>
            <person name="Vasquez L.I."/>
            <person name="Vera V.A."/>
            <person name="Villasana D.M."/>
            <person name="Wang L."/>
            <person name="Ward-Moore S."/>
            <person name="Warren J.T."/>
            <person name="Wei X."/>
            <person name="White F."/>
            <person name="Williamson A.L."/>
            <person name="Wleczyk R."/>
            <person name="Wooden H.S."/>
            <person name="Wooden S.H."/>
            <person name="Yen J."/>
            <person name="Yoon L."/>
            <person name="Yoon V."/>
            <person name="Zorrilla S.E."/>
            <person name="Nelson D."/>
            <person name="Kucherlapati R."/>
            <person name="Weinstock G."/>
            <person name="Gibbs R.A."/>
        </authorList>
    </citation>
    <scope>NUCLEOTIDE SEQUENCE [LARGE SCALE GENOMIC DNA]</scope>
</reference>
<reference key="5">
    <citation type="submission" date="2005-07" db="EMBL/GenBank/DDBJ databases">
        <authorList>
            <person name="Mural R.J."/>
            <person name="Istrail S."/>
            <person name="Sutton G."/>
            <person name="Florea L."/>
            <person name="Halpern A.L."/>
            <person name="Mobarry C.M."/>
            <person name="Lippert R."/>
            <person name="Walenz B."/>
            <person name="Shatkay H."/>
            <person name="Dew I."/>
            <person name="Miller J.R."/>
            <person name="Flanigan M.J."/>
            <person name="Edwards N.J."/>
            <person name="Bolanos R."/>
            <person name="Fasulo D."/>
            <person name="Halldorsson B.V."/>
            <person name="Hannenhalli S."/>
            <person name="Turner R."/>
            <person name="Yooseph S."/>
            <person name="Lu F."/>
            <person name="Nusskern D.R."/>
            <person name="Shue B.C."/>
            <person name="Zheng X.H."/>
            <person name="Zhong F."/>
            <person name="Delcher A.L."/>
            <person name="Huson D.H."/>
            <person name="Kravitz S.A."/>
            <person name="Mouchard L."/>
            <person name="Reinert K."/>
            <person name="Remington K.A."/>
            <person name="Clark A.G."/>
            <person name="Waterman M.S."/>
            <person name="Eichler E.E."/>
            <person name="Adams M.D."/>
            <person name="Hunkapiller M.W."/>
            <person name="Myers E.W."/>
            <person name="Venter J.C."/>
        </authorList>
    </citation>
    <scope>NUCLEOTIDE SEQUENCE [LARGE SCALE GENOMIC DNA]</scope>
</reference>
<reference key="6">
    <citation type="journal article" date="2004" name="Genome Res.">
        <title>The status, quality, and expansion of the NIH full-length cDNA project: the Mammalian Gene Collection (MGC).</title>
        <authorList>
            <consortium name="The MGC Project Team"/>
        </authorList>
    </citation>
    <scope>NUCLEOTIDE SEQUENCE [LARGE SCALE MRNA]</scope>
    <source>
        <tissue>Testis</tissue>
    </source>
</reference>
<reference key="7">
    <citation type="journal article" date="2004" name="J. Histochem. Cytochem.">
        <title>Presence and localization of three lactic acid transporters (MCT1, -2, and -4) in separated human granulocytes, lymphocytes, and monocytes.</title>
        <authorList>
            <person name="Merezhinskaya N."/>
            <person name="Ogunwuyi S.A."/>
            <person name="Mullick F.G."/>
            <person name="Fishbein W.N."/>
        </authorList>
    </citation>
    <scope>SUBCELLULAR LOCATION</scope>
    <scope>TISSUE SPECIFICITY</scope>
</reference>
<reference evidence="14" key="8">
    <citation type="journal article" date="2020" name="Nat. Commun.">
        <title>Cooperative transport mechanism of human monocarboxylate transporter 2.</title>
        <authorList>
            <person name="Zhang B."/>
            <person name="Jin Q."/>
            <person name="Xu L."/>
            <person name="Li N."/>
            <person name="Meng Y."/>
            <person name="Chang S."/>
            <person name="Zheng X."/>
            <person name="Wang J."/>
            <person name="Chen Y."/>
            <person name="Neculai D."/>
            <person name="Gao N."/>
            <person name="Zhang X."/>
            <person name="Yang F."/>
            <person name="Guo J."/>
            <person name="Ye S."/>
        </authorList>
    </citation>
    <scope>STRUCTURE BY ELECTRON MICROSCOPY (3.80 ANGSTROMS)</scope>
    <scope>TRANSPORTER ACTIVITY</scope>
    <scope>FUNCTION</scope>
    <scope>SUBUNIT</scope>
    <scope>SUBCELLULAR LOCATION</scope>
    <scope>MUTAGENESIS OF TRP-18; TRP-20; TYR-34; LYS-38; TYR-70; ARG-143; ASN-147; PHE-262; ASP-293; ARG-297; ASN-305; PHE-351; SER-355 AND GLU-360</scope>
    <scope>ACTIVITY REGULATION</scope>
</reference>
<name>MOT2_HUMAN</name>
<organism>
    <name type="scientific">Homo sapiens</name>
    <name type="common">Human</name>
    <dbReference type="NCBI Taxonomy" id="9606"/>
    <lineage>
        <taxon>Eukaryota</taxon>
        <taxon>Metazoa</taxon>
        <taxon>Chordata</taxon>
        <taxon>Craniata</taxon>
        <taxon>Vertebrata</taxon>
        <taxon>Euteleostomi</taxon>
        <taxon>Mammalia</taxon>
        <taxon>Eutheria</taxon>
        <taxon>Euarchontoglires</taxon>
        <taxon>Primates</taxon>
        <taxon>Haplorrhini</taxon>
        <taxon>Catarrhini</taxon>
        <taxon>Hominidae</taxon>
        <taxon>Homo</taxon>
    </lineage>
</organism>
<feature type="chain" id="PRO_0000211385" description="Monocarboxylate transporter 2">
    <location>
        <begin position="1"/>
        <end position="478"/>
    </location>
</feature>
<feature type="topological domain" description="Cytoplasmic" evidence="11">
    <location>
        <begin position="1"/>
        <end position="15"/>
    </location>
</feature>
<feature type="transmembrane region" description="Helical; Name=1" evidence="4">
    <location>
        <begin position="16"/>
        <end position="36"/>
    </location>
</feature>
<feature type="topological domain" description="Extracellular" evidence="11">
    <location>
        <begin position="37"/>
        <end position="59"/>
    </location>
</feature>
<feature type="transmembrane region" description="Helical; Name=2" evidence="4">
    <location>
        <begin position="60"/>
        <end position="80"/>
    </location>
</feature>
<feature type="topological domain" description="Cytoplasmic" evidence="11">
    <location>
        <begin position="81"/>
        <end position="89"/>
    </location>
</feature>
<feature type="transmembrane region" description="Helical; Name=3" evidence="4">
    <location>
        <begin position="90"/>
        <end position="110"/>
    </location>
</feature>
<feature type="topological domain" description="Extracellular" evidence="11">
    <location>
        <begin position="111"/>
        <end position="115"/>
    </location>
</feature>
<feature type="transmembrane region" description="Helical; Name=4" evidence="4">
    <location>
        <begin position="116"/>
        <end position="136"/>
    </location>
</feature>
<feature type="topological domain" description="Cytoplasmic" evidence="11">
    <location>
        <begin position="137"/>
        <end position="148"/>
    </location>
</feature>
<feature type="transmembrane region" description="Helical; Name=5" evidence="4">
    <location>
        <begin position="149"/>
        <end position="169"/>
    </location>
</feature>
<feature type="topological domain" description="Extracellular" evidence="11">
    <location>
        <begin position="170"/>
        <end position="173"/>
    </location>
</feature>
<feature type="transmembrane region" description="Helical; Name=6" evidence="4">
    <location>
        <begin position="174"/>
        <end position="194"/>
    </location>
</feature>
<feature type="topological domain" description="Cytoplasmic" evidence="11">
    <location>
        <begin position="195"/>
        <end position="246"/>
    </location>
</feature>
<feature type="transmembrane region" description="Helical; Name=7" evidence="4">
    <location>
        <begin position="247"/>
        <end position="267"/>
    </location>
</feature>
<feature type="topological domain" description="Extracellular" evidence="11">
    <location>
        <begin position="268"/>
        <end position="282"/>
    </location>
</feature>
<feature type="transmembrane region" description="Helical; Name=8" evidence="4">
    <location>
        <begin position="283"/>
        <end position="303"/>
    </location>
</feature>
<feature type="topological domain" description="Cytoplasmic" evidence="11">
    <location>
        <begin position="304"/>
        <end position="312"/>
    </location>
</feature>
<feature type="transmembrane region" description="Helical; Name=9" evidence="4">
    <location>
        <begin position="313"/>
        <end position="333"/>
    </location>
</feature>
<feature type="topological domain" description="Extracellular" evidence="11">
    <location>
        <begin position="334"/>
        <end position="338"/>
    </location>
</feature>
<feature type="transmembrane region" description="Helical; Name=10" evidence="4">
    <location>
        <begin position="339"/>
        <end position="359"/>
    </location>
</feature>
<feature type="topological domain" description="Cytoplasmic" evidence="11">
    <location>
        <begin position="360"/>
        <end position="373"/>
    </location>
</feature>
<feature type="transmembrane region" description="Helical; Name=11" evidence="4">
    <location>
        <begin position="374"/>
        <end position="394"/>
    </location>
</feature>
<feature type="topological domain" description="Extracellular" evidence="11">
    <location>
        <begin position="395"/>
        <end position="406"/>
    </location>
</feature>
<feature type="transmembrane region" description="Helical; Name=12" evidence="4">
    <location>
        <begin position="407"/>
        <end position="427"/>
    </location>
</feature>
<feature type="topological domain" description="Cytoplasmic" evidence="11">
    <location>
        <begin position="428"/>
        <end position="478"/>
    </location>
</feature>
<feature type="region of interest" description="Disordered" evidence="5">
    <location>
        <begin position="200"/>
        <end position="224"/>
    </location>
</feature>
<feature type="region of interest" description="Disordered" evidence="5">
    <location>
        <begin position="437"/>
        <end position="478"/>
    </location>
</feature>
<feature type="compositionally biased region" description="Basic and acidic residues" evidence="5">
    <location>
        <begin position="437"/>
        <end position="461"/>
    </location>
</feature>
<feature type="site" description="May be protonated during monocarboxylate transport" evidence="7">
    <location>
        <position position="293"/>
    </location>
</feature>
<feature type="sequence variant" id="VAR_031660" description="In dbSNP:rs3763980." evidence="9">
    <original>T</original>
    <variation>S</variation>
    <location>
        <position position="445"/>
    </location>
</feature>
<feature type="mutagenesis site" description="Reduces pyruvate transmembrane transporter activity. No effect on protein abundance. Does not affect cell surface localization. Dominant negative mutant." evidence="7">
    <original>W</original>
    <variation>A</variation>
    <location>
        <position position="18"/>
    </location>
</feature>
<feature type="mutagenesis site" description="Reduces pyruvate transmembrane transporter activity. No effect on protein abundance. Does not affect cell surface localization. Dominant negative mutant." evidence="7">
    <original>W</original>
    <variation>A</variation>
    <location>
        <position position="20"/>
    </location>
</feature>
<feature type="mutagenesis site" description="Reduces pyruvate transmembrane transporter activity. No effect on protein abundance. Does not affect cell surface localization." evidence="7">
    <original>Y</original>
    <variation>F</variation>
    <location>
        <position position="34"/>
    </location>
</feature>
<feature type="mutagenesis site" description="Reduces pyruvate transmembrane transporter activity. No effect on protein abundance. Does not affect cell surface localization." evidence="7">
    <original>K</original>
    <variation>D</variation>
    <location>
        <position position="38"/>
    </location>
</feature>
<feature type="mutagenesis site" description="No effect on protein abundance. Does not affect cell surface localization." evidence="7">
    <original>Y</original>
    <variation>A</variation>
    <location>
        <position position="70"/>
    </location>
</feature>
<feature type="mutagenesis site" description="Reduces pyruvate transmembrane transporter activity. Reduces pyruvate transmembrane transporter activity. No effect on protein abundance. Does not affect cell surface localization. Dominant negative mutant." evidence="7">
    <original>R</original>
    <variation>A</variation>
    <location>
        <position position="143"/>
    </location>
</feature>
<feature type="mutagenesis site" description="Reduces pyruvate transmembrane transporter activity. Reduces pyruvate transmembrane transporter activity. No effect on protein abundance. Does not affect cell surface localization." evidence="7">
    <original>N</original>
    <variation>A</variation>
    <location>
        <position position="147"/>
    </location>
</feature>
<feature type="mutagenesis site" description="No effect on protein abundance. Does not affect cell surface localization." evidence="7">
    <original>F</original>
    <variation>A</variation>
    <location>
        <position position="262"/>
    </location>
</feature>
<feature type="mutagenesis site" description="Reduced proton-dependent active symport, but not pyruvate transport." evidence="7">
    <original>D</original>
    <variation>N</variation>
    <location>
        <position position="293"/>
    </location>
</feature>
<feature type="mutagenesis site" description="Reduces pyruvate transmembrane transporter activity. No effect on protein abundance. Does not affect cell surface localization." evidence="7">
    <original>R</original>
    <variation>L</variation>
    <variation>D</variation>
    <location>
        <position position="297"/>
    </location>
</feature>
<feature type="mutagenesis site" description="Reduces pyruvate transmembrane transporter activity. No effect on protein abundance. Does not affect cell surface localization." evidence="7">
    <original>N</original>
    <variation>A</variation>
    <location>
        <position position="305"/>
    </location>
</feature>
<feature type="mutagenesis site" description="Reduces pyruvate transmembrane transporter activity. No effect on protein abundance. Does not affect cell surface localization." evidence="7">
    <original>F</original>
    <variation>A</variation>
    <location>
        <position position="351"/>
    </location>
</feature>
<feature type="mutagenesis site" description="Reduces pyruvate transmembrane transporter activity. No effect on protein abundance. Does not affect cell surface localization." evidence="7">
    <original>S</original>
    <variation>G</variation>
    <variation>A</variation>
    <location>
        <position position="355"/>
    </location>
</feature>
<feature type="mutagenesis site" description="Reduces pyruvate transmembrane transporter activity. No effect on protein abundance. Does not affect cell surface localization." evidence="7">
    <original>E</original>
    <variation>A</variation>
    <location>
        <position position="360"/>
    </location>
</feature>
<feature type="sequence conflict" description="In Ref. 2; AAC70919." evidence="11" ref="2">
    <original>A</original>
    <variation>T</variation>
    <location>
        <position position="26"/>
    </location>
</feature>
<feature type="sequence conflict" description="In Ref. 2; AAC70919." evidence="11" ref="2">
    <original>S</original>
    <variation>N</variation>
    <location>
        <position position="154"/>
    </location>
</feature>
<feature type="sequence conflict" description="In Ref. 2; AAC70919." evidence="11" ref="2">
    <original>L</original>
    <variation>P</variation>
    <location>
        <position position="268"/>
    </location>
</feature>
<sequence>MPPMPSAPPVHPPPDGGWGWIVVGAAFISIGFSYAFPKAVTVFFKEIQQIFHTTYSEIAWISSIMLAVMYAGGPVSSVLVNKYGSRPVVIAGGLLCCLGMVLASFSSSVVQLYLTMGFITGLGLAFNLQPALTIIGKYFYRKRPMANGLAMAGSPVFLSSLAPFNQYLFNTFGWKGSFLILGSLLLNACVAGSLMRPLGPNQTTSKSKNKTGKTEDDSSPKKIKTKKSTWEKVNKYLDFSLFKHRGFLIYLSGNVIMFLGFFAPIIFLAPYAKDQGIDEYSAAFLLSVMAFVDMFARPSVGLIANSKYIRPRIQYFFSFAIMFNGVCHLLCPLAQDYTSLVLYAVFFGLGFGSVSSVLFETLMDLVGAPRFSSAVGLVTIVECGPVLLGPPLAGKLVDLTGEYKYMYMSCGAIVVAASVWLLIGNAINYRLLAKERKEENARQKTRESEPLSKSKHSEDVNVKVSNAQSVTSERETNI</sequence>
<keyword id="KW-0002">3D-structure</keyword>
<keyword id="KW-1003">Cell membrane</keyword>
<keyword id="KW-0963">Cytoplasm</keyword>
<keyword id="KW-0472">Membrane</keyword>
<keyword id="KW-1267">Proteomics identification</keyword>
<keyword id="KW-1185">Reference proteome</keyword>
<keyword id="KW-0769">Symport</keyword>
<keyword id="KW-0812">Transmembrane</keyword>
<keyword id="KW-1133">Transmembrane helix</keyword>
<keyword id="KW-0813">Transport</keyword>
<evidence type="ECO:0000250" key="1">
    <source>
        <dbReference type="UniProtKB" id="O70451"/>
    </source>
</evidence>
<evidence type="ECO:0000250" key="2">
    <source>
        <dbReference type="UniProtKB" id="P53988"/>
    </source>
</evidence>
<evidence type="ECO:0000250" key="3">
    <source>
        <dbReference type="UniProtKB" id="Q63344"/>
    </source>
</evidence>
<evidence type="ECO:0000255" key="4"/>
<evidence type="ECO:0000256" key="5">
    <source>
        <dbReference type="SAM" id="MobiDB-lite"/>
    </source>
</evidence>
<evidence type="ECO:0000269" key="6">
    <source>
    </source>
</evidence>
<evidence type="ECO:0000269" key="7">
    <source>
    </source>
</evidence>
<evidence type="ECO:0000269" key="8">
    <source>
    </source>
</evidence>
<evidence type="ECO:0000269" key="9">
    <source ref="2"/>
</evidence>
<evidence type="ECO:0000303" key="10">
    <source>
    </source>
</evidence>
<evidence type="ECO:0000305" key="11"/>
<evidence type="ECO:0000305" key="12">
    <source>
    </source>
</evidence>
<evidence type="ECO:0000312" key="13">
    <source>
        <dbReference type="HGNC" id="HGNC:10928"/>
    </source>
</evidence>
<evidence type="ECO:0007744" key="14">
    <source>
        <dbReference type="PDB" id="7BP3"/>
    </source>
</evidence>
<comment type="function">
    <text evidence="7 8">Proton-coupled monocarboxylate symporter. Catalyzes the rapid transport across the plasma membrane of monocarboxylates such as L-lactate, pyruvate and ketone bodies, acetoacetate, beta-hydroxybutyrate and acetate (PubMed:32415067, PubMed:9786900). Dimerization is functionally required and both subunits work cooperatively in transporting substrate (PubMed:32415067).</text>
</comment>
<comment type="catalytic activity">
    <reaction evidence="7 8">
        <text>pyruvate(out) + H(+)(out) = pyruvate(in) + H(+)(in)</text>
        <dbReference type="Rhea" id="RHEA:64720"/>
        <dbReference type="ChEBI" id="CHEBI:15361"/>
        <dbReference type="ChEBI" id="CHEBI:15378"/>
    </reaction>
    <physiologicalReaction direction="left-to-right" evidence="12">
        <dbReference type="Rhea" id="RHEA:64721"/>
    </physiologicalReaction>
    <physiologicalReaction direction="right-to-left" evidence="12">
        <dbReference type="Rhea" id="RHEA:64722"/>
    </physiologicalReaction>
</comment>
<comment type="catalytic activity">
    <reaction evidence="3">
        <text>3-methyl-2-oxobutanoate(out) + H(+)(out) = 3-methyl-2-oxobutanoate(in) + H(+)(in)</text>
        <dbReference type="Rhea" id="RHEA:71783"/>
        <dbReference type="ChEBI" id="CHEBI:11851"/>
        <dbReference type="ChEBI" id="CHEBI:15378"/>
    </reaction>
</comment>
<comment type="catalytic activity">
    <reaction evidence="3">
        <text>(S)-lactate(in) + H(+)(in) = (S)-lactate(out) + H(+)(out)</text>
        <dbReference type="Rhea" id="RHEA:29415"/>
        <dbReference type="ChEBI" id="CHEBI:15378"/>
        <dbReference type="ChEBI" id="CHEBI:16651"/>
    </reaction>
</comment>
<comment type="catalytic activity">
    <reaction evidence="3">
        <text>acetoacetate(out) + H(+)(out) = acetoacetate(in) + H(+)(in)</text>
        <dbReference type="Rhea" id="RHEA:71775"/>
        <dbReference type="ChEBI" id="CHEBI:13705"/>
        <dbReference type="ChEBI" id="CHEBI:15378"/>
    </reaction>
</comment>
<comment type="catalytic activity">
    <reaction evidence="3">
        <text>(R)-3-hydroxybutanoate(out) + H(+)(out) = (R)-3-hydroxybutanoate(in) + H(+)(in)</text>
        <dbReference type="Rhea" id="RHEA:71795"/>
        <dbReference type="ChEBI" id="CHEBI:10983"/>
        <dbReference type="ChEBI" id="CHEBI:15378"/>
    </reaction>
</comment>
<comment type="catalytic activity">
    <reaction evidence="3">
        <text>4-methyl-2-oxopentanoate(out) + H(+)(out) = 4-methyl-2-oxopentanoate(in) + H(+)(in)</text>
        <dbReference type="Rhea" id="RHEA:71779"/>
        <dbReference type="ChEBI" id="CHEBI:15378"/>
        <dbReference type="ChEBI" id="CHEBI:17865"/>
    </reaction>
</comment>
<comment type="catalytic activity">
    <reaction evidence="3">
        <text>(S)-3-hydroxybutanoate(out) + H(+)(out) = (S)-3-hydroxybutanoate(in) + H(+)(in)</text>
        <dbReference type="Rhea" id="RHEA:71871"/>
        <dbReference type="ChEBI" id="CHEBI:11047"/>
        <dbReference type="ChEBI" id="CHEBI:15378"/>
    </reaction>
</comment>
<comment type="activity regulation">
    <text evidence="7">Transport activity exhibits steep dependence on substrate concentration (PubMed:32415067). Substrate concentration sensitivity of SLC16A7 arises from the strong inter-subunit cooperativity of the SLC16A7 dimer during transport (PubMed:32415067). Inhibited by AR-C155858 (PubMed:32415067).</text>
</comment>
<comment type="biophysicochemical properties">
    <kinetics>
        <KM evidence="8">25 uM for pyruvate</KM>
    </kinetics>
</comment>
<comment type="subunit">
    <text evidence="1 3 7">Homodimer (PubMed:32415067). Interacts with GRID2IP (By similarity). Interacts with EMB; interaction mediates SLC16A7 targeting to the plasma membrane (By similarity). Interacts with isoform 2 of BSG (By similarity).</text>
</comment>
<comment type="interaction">
    <interactant intactId="EBI-3921243">
        <id>O60669</id>
    </interactant>
    <interactant intactId="EBI-2876927">
        <id>Q9ULC5</id>
        <label>ACSL5</label>
    </interactant>
    <organismsDiffer>false</organismsDiffer>
    <experiments>3</experiments>
</comment>
<comment type="interaction">
    <interactant intactId="EBI-3921243">
        <id>O60669</id>
    </interactant>
    <interactant intactId="EBI-358858">
        <id>O14735</id>
        <label>CDIPT</label>
    </interactant>
    <organismsDiffer>false</organismsDiffer>
    <experiments>3</experiments>
</comment>
<comment type="interaction">
    <interactant intactId="EBI-3921243">
        <id>O60669</id>
    </interactant>
    <interactant intactId="EBI-372265">
        <id>P21964</id>
        <label>COMT</label>
    </interactant>
    <organismsDiffer>false</organismsDiffer>
    <experiments>3</experiments>
</comment>
<comment type="interaction">
    <interactant intactId="EBI-3921243">
        <id>O60669</id>
    </interactant>
    <interactant intactId="EBI-713304">
        <id>Q9H0Q3</id>
        <label>FXYD6</label>
    </interactant>
    <organismsDiffer>false</organismsDiffer>
    <experiments>3</experiments>
</comment>
<comment type="interaction">
    <interactant intactId="EBI-3921243">
        <id>O60669</id>
    </interactant>
    <interactant intactId="EBI-10178951">
        <id>O00155</id>
        <label>GPR25</label>
    </interactant>
    <organismsDiffer>false</organismsDiffer>
    <experiments>3</experiments>
</comment>
<comment type="interaction">
    <interactant intactId="EBI-3921243">
        <id>O60669</id>
    </interactant>
    <interactant intactId="EBI-2806151">
        <id>P09601</id>
        <label>HMOX1</label>
    </interactant>
    <organismsDiffer>false</organismsDiffer>
    <experiments>3</experiments>
</comment>
<comment type="interaction">
    <interactant intactId="EBI-3921243">
        <id>O60669</id>
    </interactant>
    <interactant intactId="EBI-7932862">
        <id>Q01628</id>
        <label>IFITM3</label>
    </interactant>
    <organismsDiffer>false</organismsDiffer>
    <experiments>3</experiments>
</comment>
<comment type="interaction">
    <interactant intactId="EBI-3921243">
        <id>O60669</id>
    </interactant>
    <interactant intactId="EBI-12268900">
        <id>Q68G75</id>
        <label>LEMD1</label>
    </interactant>
    <organismsDiffer>false</organismsDiffer>
    <experiments>3</experiments>
</comment>
<comment type="interaction">
    <interactant intactId="EBI-3921243">
        <id>O60669</id>
    </interactant>
    <interactant intactId="EBI-355861">
        <id>Q9H9B4</id>
        <label>SFXN1</label>
    </interactant>
    <organismsDiffer>false</organismsDiffer>
    <experiments>3</experiments>
</comment>
<comment type="interaction">
    <interactant intactId="EBI-3921243">
        <id>O60669</id>
    </interactant>
    <interactant intactId="EBI-10226799">
        <id>Q0VAQ4</id>
        <label>SMAGP</label>
    </interactant>
    <organismsDiffer>false</organismsDiffer>
    <experiments>3</experiments>
</comment>
<comment type="interaction">
    <interactant intactId="EBI-3921243">
        <id>O60669</id>
    </interactant>
    <interactant intactId="EBI-1047996">
        <id>O14925</id>
        <label>TIMM23</label>
    </interactant>
    <organismsDiffer>false</organismsDiffer>
    <experiments>3</experiments>
</comment>
<comment type="interaction">
    <interactant intactId="EBI-3921243">
        <id>O60669</id>
    </interactant>
    <interactant intactId="EBI-1059156">
        <id>Q9P0L0</id>
        <label>VAPA</label>
    </interactant>
    <organismsDiffer>false</organismsDiffer>
    <experiments>3</experiments>
</comment>
<comment type="interaction">
    <interactant intactId="EBI-3921243">
        <id>O60669</id>
    </interactant>
    <interactant intactId="EBI-723716">
        <id>Q9UEU0</id>
        <label>VTI1B</label>
    </interactant>
    <organismsDiffer>false</organismsDiffer>
    <experiments>3</experiments>
</comment>
<comment type="subcellular location">
    <subcellularLocation>
        <location evidence="6 7">Cell membrane</location>
        <topology evidence="7">Multi-pass membrane protein</topology>
    </subcellularLocation>
    <subcellularLocation>
        <location evidence="2">Basolateral cell membrane</location>
        <topology evidence="7">Multi-pass membrane protein</topology>
    </subcellularLocation>
    <subcellularLocation>
        <location evidence="1">Cytoplasm</location>
    </subcellularLocation>
    <text evidence="1 3">Requires the ancillary protein, EMB for plasma membrane localization (By similarity). Colocalizes with BSG in spermatozoa. Detected in the cytoplasm of Sertoli cells (By similarity).</text>
</comment>
<comment type="tissue specificity">
    <text evidence="6 8">Detected in heart and in blood lymphocytes and monocytes (at protein level) (PubMed:15505343). High expression in testis, moderate to low in spleen, heart, kidney, pancreas, skeletal muscle, brain and leukocyte (PubMed:9786900). Restricted expression in normal tissues, but widely expressed in cancer cells.</text>
</comment>
<comment type="similarity">
    <text evidence="11">Belongs to the major facilitator superfamily. Monocarboxylate porter (TC 2.A.1.13) family.</text>
</comment>
<proteinExistence type="evidence at protein level"/>
<accession>O60669</accession>
<accession>Q8NEM3</accession>
<accession>Q9UPB3</accession>
<protein>
    <recommendedName>
        <fullName>Monocarboxylate transporter 2</fullName>
        <shortName>MCT 2</shortName>
    </recommendedName>
    <alternativeName>
        <fullName>Solute carrier family 16 member 7</fullName>
    </alternativeName>
</protein>
<dbReference type="EMBL" id="AF049608">
    <property type="protein sequence ID" value="AAC70919.1"/>
    <property type="molecule type" value="mRNA"/>
</dbReference>
<dbReference type="EMBL" id="AF058056">
    <property type="protein sequence ID" value="AAC13721.1"/>
    <property type="molecule type" value="mRNA"/>
</dbReference>
<dbReference type="EMBL" id="AK313345">
    <property type="protein sequence ID" value="BAG36148.1"/>
    <property type="molecule type" value="mRNA"/>
</dbReference>
<dbReference type="EMBL" id="AC079905">
    <property type="status" value="NOT_ANNOTATED_CDS"/>
    <property type="molecule type" value="Genomic_DNA"/>
</dbReference>
<dbReference type="EMBL" id="CH471054">
    <property type="protein sequence ID" value="EAW97096.1"/>
    <property type="molecule type" value="Genomic_DNA"/>
</dbReference>
<dbReference type="EMBL" id="BC030693">
    <property type="protein sequence ID" value="AAH30693.1"/>
    <property type="molecule type" value="mRNA"/>
</dbReference>
<dbReference type="CCDS" id="CCDS8961.1"/>
<dbReference type="RefSeq" id="NP_001257551.1">
    <property type="nucleotide sequence ID" value="NM_001270622.2"/>
</dbReference>
<dbReference type="RefSeq" id="NP_001257552.1">
    <property type="nucleotide sequence ID" value="NM_001270623.2"/>
</dbReference>
<dbReference type="RefSeq" id="NP_004722.2">
    <property type="nucleotide sequence ID" value="NM_004731.4"/>
</dbReference>
<dbReference type="RefSeq" id="XP_005269288.1">
    <property type="nucleotide sequence ID" value="XM_005269231.4"/>
</dbReference>
<dbReference type="RefSeq" id="XP_024305044.1">
    <property type="nucleotide sequence ID" value="XM_024449276.2"/>
</dbReference>
<dbReference type="RefSeq" id="XP_054229813.1">
    <property type="nucleotide sequence ID" value="XM_054373838.1"/>
</dbReference>
<dbReference type="RefSeq" id="XP_054229814.1">
    <property type="nucleotide sequence ID" value="XM_054373839.1"/>
</dbReference>
<dbReference type="PDB" id="7BP3">
    <property type="method" value="EM"/>
    <property type="resolution" value="3.80 A"/>
    <property type="chains" value="A/B=1-478"/>
</dbReference>
<dbReference type="PDBsum" id="7BP3"/>
<dbReference type="EMDB" id="EMD-30143"/>
<dbReference type="SMR" id="O60669"/>
<dbReference type="BioGRID" id="114629">
    <property type="interactions" value="31"/>
</dbReference>
<dbReference type="FunCoup" id="O60669">
    <property type="interactions" value="496"/>
</dbReference>
<dbReference type="IntAct" id="O60669">
    <property type="interactions" value="22"/>
</dbReference>
<dbReference type="MINT" id="O60669"/>
<dbReference type="STRING" id="9606.ENSP00000448071"/>
<dbReference type="ChEMBL" id="CHEMBL2073704"/>
<dbReference type="DrugBank" id="DB01762">
    <property type="generic name" value="Acetoacetic acid"/>
</dbReference>
<dbReference type="DrugBank" id="DB03773">
    <property type="generic name" value="alpha-D-quinovopyranose"/>
</dbReference>
<dbReference type="DrugBank" id="DB04074">
    <property type="generic name" value="alpha-Ketoisovalerate"/>
</dbReference>
<dbReference type="DrugBank" id="DB03066">
    <property type="generic name" value="D-Lactic acid"/>
</dbReference>
<dbReference type="DrugBank" id="DB01440">
    <property type="generic name" value="gamma-Hydroxybutyric acid"/>
</dbReference>
<dbReference type="DrugBank" id="DB04398">
    <property type="generic name" value="Lactic acid"/>
</dbReference>
<dbReference type="DrugBank" id="DB04552">
    <property type="generic name" value="Niflumic acid"/>
</dbReference>
<dbReference type="DrugBank" id="DB01032">
    <property type="generic name" value="Probenecid"/>
</dbReference>
<dbReference type="DrugBank" id="DB00119">
    <property type="generic name" value="Pyruvic acid"/>
</dbReference>
<dbReference type="DrugBank" id="DB04216">
    <property type="generic name" value="Quercetin"/>
</dbReference>
<dbReference type="GuidetoPHARMACOLOGY" id="990"/>
<dbReference type="TCDB" id="2.A.1.13.5">
    <property type="family name" value="the major facilitator superfamily (mfs)"/>
</dbReference>
<dbReference type="GlyCosmos" id="O60669">
    <property type="glycosylation" value="1 site, 1 glycan"/>
</dbReference>
<dbReference type="GlyGen" id="O60669">
    <property type="glycosylation" value="1 site, 1 O-linked glycan (1 site)"/>
</dbReference>
<dbReference type="iPTMnet" id="O60669"/>
<dbReference type="PhosphoSitePlus" id="O60669"/>
<dbReference type="BioMuta" id="SLC16A7"/>
<dbReference type="jPOST" id="O60669"/>
<dbReference type="MassIVE" id="O60669"/>
<dbReference type="PaxDb" id="9606-ENSP00000261187"/>
<dbReference type="PeptideAtlas" id="O60669"/>
<dbReference type="ProteomicsDB" id="49513"/>
<dbReference type="Pumba" id="O60669"/>
<dbReference type="Antibodypedia" id="1576">
    <property type="antibodies" value="243 antibodies from 35 providers"/>
</dbReference>
<dbReference type="DNASU" id="9194"/>
<dbReference type="Ensembl" id="ENST00000261187.8">
    <property type="protein sequence ID" value="ENSP00000261187.4"/>
    <property type="gene ID" value="ENSG00000118596.12"/>
</dbReference>
<dbReference type="Ensembl" id="ENST00000547379.6">
    <property type="protein sequence ID" value="ENSP00000448071.1"/>
    <property type="gene ID" value="ENSG00000118596.12"/>
</dbReference>
<dbReference type="Ensembl" id="ENST00000552024.5">
    <property type="protein sequence ID" value="ENSP00000448742.1"/>
    <property type="gene ID" value="ENSG00000118596.12"/>
</dbReference>
<dbReference type="Ensembl" id="ENST00000552432.5">
    <property type="protein sequence ID" value="ENSP00000449547.1"/>
    <property type="gene ID" value="ENSG00000118596.12"/>
</dbReference>
<dbReference type="GeneID" id="9194"/>
<dbReference type="KEGG" id="hsa:9194"/>
<dbReference type="MANE-Select" id="ENST00000547379.6">
    <property type="protein sequence ID" value="ENSP00000448071.1"/>
    <property type="RefSeq nucleotide sequence ID" value="NM_001270623.2"/>
    <property type="RefSeq protein sequence ID" value="NP_001257552.1"/>
</dbReference>
<dbReference type="UCSC" id="uc001sqs.5">
    <property type="organism name" value="human"/>
</dbReference>
<dbReference type="AGR" id="HGNC:10928"/>
<dbReference type="CTD" id="9194"/>
<dbReference type="DisGeNET" id="9194"/>
<dbReference type="GeneCards" id="SLC16A7"/>
<dbReference type="HGNC" id="HGNC:10928">
    <property type="gene designation" value="SLC16A7"/>
</dbReference>
<dbReference type="HPA" id="ENSG00000118596">
    <property type="expression patterns" value="Tissue enhanced (heart)"/>
</dbReference>
<dbReference type="MIM" id="603654">
    <property type="type" value="gene"/>
</dbReference>
<dbReference type="neXtProt" id="NX_O60669"/>
<dbReference type="OpenTargets" id="ENSG00000118596"/>
<dbReference type="PharmGKB" id="PA35819"/>
<dbReference type="VEuPathDB" id="HostDB:ENSG00000118596"/>
<dbReference type="eggNOG" id="KOG2504">
    <property type="taxonomic scope" value="Eukaryota"/>
</dbReference>
<dbReference type="GeneTree" id="ENSGT00940000157309"/>
<dbReference type="InParanoid" id="O60669"/>
<dbReference type="OMA" id="MGVAPMT"/>
<dbReference type="OrthoDB" id="6499973at2759"/>
<dbReference type="PAN-GO" id="O60669">
    <property type="GO annotations" value="3 GO annotations based on evolutionary models"/>
</dbReference>
<dbReference type="PhylomeDB" id="O60669"/>
<dbReference type="TreeFam" id="TF313792"/>
<dbReference type="PathwayCommons" id="O60669"/>
<dbReference type="Reactome" id="R-HSA-433692">
    <property type="pathway name" value="Proton-coupled monocarboxylate transport"/>
</dbReference>
<dbReference type="SABIO-RK" id="O60669"/>
<dbReference type="SignaLink" id="O60669"/>
<dbReference type="BioGRID-ORCS" id="9194">
    <property type="hits" value="17 hits in 1154 CRISPR screens"/>
</dbReference>
<dbReference type="ChiTaRS" id="SLC16A7">
    <property type="organism name" value="human"/>
</dbReference>
<dbReference type="GenomeRNAi" id="9194"/>
<dbReference type="Pharos" id="O60669">
    <property type="development level" value="Tchem"/>
</dbReference>
<dbReference type="PRO" id="PR:O60669"/>
<dbReference type="Proteomes" id="UP000005640">
    <property type="component" value="Chromosome 12"/>
</dbReference>
<dbReference type="RNAct" id="O60669">
    <property type="molecule type" value="protein"/>
</dbReference>
<dbReference type="Bgee" id="ENSG00000118596">
    <property type="expression patterns" value="Expressed in heart right ventricle and 205 other cell types or tissues"/>
</dbReference>
<dbReference type="ExpressionAtlas" id="O60669">
    <property type="expression patterns" value="baseline and differential"/>
</dbReference>
<dbReference type="GO" id="GO:0016323">
    <property type="term" value="C:basolateral plasma membrane"/>
    <property type="evidence" value="ECO:0000250"/>
    <property type="project" value="UniProtKB"/>
</dbReference>
<dbReference type="GO" id="GO:0005829">
    <property type="term" value="C:cytosol"/>
    <property type="evidence" value="ECO:0000314"/>
    <property type="project" value="HPA"/>
</dbReference>
<dbReference type="GO" id="GO:0098978">
    <property type="term" value="C:glutamatergic synapse"/>
    <property type="evidence" value="ECO:0007669"/>
    <property type="project" value="Ensembl"/>
</dbReference>
<dbReference type="GO" id="GO:0098686">
    <property type="term" value="C:hippocampal mossy fiber to CA3 synapse"/>
    <property type="evidence" value="ECO:0007669"/>
    <property type="project" value="Ensembl"/>
</dbReference>
<dbReference type="GO" id="GO:0005654">
    <property type="term" value="C:nucleoplasm"/>
    <property type="evidence" value="ECO:0000314"/>
    <property type="project" value="HPA"/>
</dbReference>
<dbReference type="GO" id="GO:0098688">
    <property type="term" value="C:parallel fiber to Purkinje cell synapse"/>
    <property type="evidence" value="ECO:0007669"/>
    <property type="project" value="Ensembl"/>
</dbReference>
<dbReference type="GO" id="GO:0005886">
    <property type="term" value="C:plasma membrane"/>
    <property type="evidence" value="ECO:0000314"/>
    <property type="project" value="UniProtKB"/>
</dbReference>
<dbReference type="GO" id="GO:0098839">
    <property type="term" value="C:postsynaptic density membrane"/>
    <property type="evidence" value="ECO:0007669"/>
    <property type="project" value="Ensembl"/>
</dbReference>
<dbReference type="GO" id="GO:0098685">
    <property type="term" value="C:Schaffer collateral - CA1 synapse"/>
    <property type="evidence" value="ECO:0007669"/>
    <property type="project" value="Ensembl"/>
</dbReference>
<dbReference type="GO" id="GO:0042802">
    <property type="term" value="F:identical protein binding"/>
    <property type="evidence" value="ECO:0000314"/>
    <property type="project" value="UniProtKB"/>
</dbReference>
<dbReference type="GO" id="GO:0015129">
    <property type="term" value="F:lactate transmembrane transporter activity"/>
    <property type="evidence" value="ECO:0000314"/>
    <property type="project" value="UniProtKB"/>
</dbReference>
<dbReference type="GO" id="GO:0005477">
    <property type="term" value="F:pyruvate secondary active transmembrane transporter activity"/>
    <property type="evidence" value="ECO:0000304"/>
    <property type="project" value="ProtInc"/>
</dbReference>
<dbReference type="GO" id="GO:0050833">
    <property type="term" value="F:pyruvate transmembrane transporter activity"/>
    <property type="evidence" value="ECO:0000314"/>
    <property type="project" value="UniProtKB"/>
</dbReference>
<dbReference type="GO" id="GO:0015293">
    <property type="term" value="F:symporter activity"/>
    <property type="evidence" value="ECO:0000314"/>
    <property type="project" value="UniProtKB"/>
</dbReference>
<dbReference type="GO" id="GO:0035873">
    <property type="term" value="P:lactate transmembrane transport"/>
    <property type="evidence" value="ECO:0000315"/>
    <property type="project" value="UniProtKB"/>
</dbReference>
<dbReference type="GO" id="GO:0035879">
    <property type="term" value="P:plasma membrane lactate transport"/>
    <property type="evidence" value="ECO:0000318"/>
    <property type="project" value="GO_Central"/>
</dbReference>
<dbReference type="GO" id="GO:1901475">
    <property type="term" value="P:pyruvate transmembrane transport"/>
    <property type="evidence" value="ECO:0000314"/>
    <property type="project" value="UniProtKB"/>
</dbReference>
<dbReference type="GO" id="GO:0150104">
    <property type="term" value="P:transport across blood-brain barrier"/>
    <property type="evidence" value="ECO:0000303"/>
    <property type="project" value="ARUK-UCL"/>
</dbReference>
<dbReference type="CDD" id="cd17427">
    <property type="entry name" value="MFS_MCT2"/>
    <property type="match status" value="1"/>
</dbReference>
<dbReference type="FunFam" id="1.20.1250.20:FF:000030">
    <property type="entry name" value="monocarboxylate transporter 1 isoform X1"/>
    <property type="match status" value="1"/>
</dbReference>
<dbReference type="Gene3D" id="1.20.1250.20">
    <property type="entry name" value="MFS general substrate transporter like domains"/>
    <property type="match status" value="1"/>
</dbReference>
<dbReference type="InterPro" id="IPR004743">
    <property type="entry name" value="MCT"/>
</dbReference>
<dbReference type="InterPro" id="IPR011701">
    <property type="entry name" value="MFS"/>
</dbReference>
<dbReference type="InterPro" id="IPR020846">
    <property type="entry name" value="MFS_dom"/>
</dbReference>
<dbReference type="InterPro" id="IPR036259">
    <property type="entry name" value="MFS_trans_sf"/>
</dbReference>
<dbReference type="InterPro" id="IPR050327">
    <property type="entry name" value="Proton-linked_MCT"/>
</dbReference>
<dbReference type="NCBIfam" id="TIGR00892">
    <property type="entry name" value="2A0113"/>
    <property type="match status" value="1"/>
</dbReference>
<dbReference type="PANTHER" id="PTHR11360">
    <property type="entry name" value="MONOCARBOXYLATE TRANSPORTER"/>
    <property type="match status" value="1"/>
</dbReference>
<dbReference type="PANTHER" id="PTHR11360:SF25">
    <property type="entry name" value="MONOCARBOXYLATE TRANSPORTER 2"/>
    <property type="match status" value="1"/>
</dbReference>
<dbReference type="Pfam" id="PF07690">
    <property type="entry name" value="MFS_1"/>
    <property type="match status" value="1"/>
</dbReference>
<dbReference type="SUPFAM" id="SSF103473">
    <property type="entry name" value="MFS general substrate transporter"/>
    <property type="match status" value="1"/>
</dbReference>
<dbReference type="PROSITE" id="PS50850">
    <property type="entry name" value="MFS"/>
    <property type="match status" value="1"/>
</dbReference>